<evidence type="ECO:0000255" key="1">
    <source>
        <dbReference type="HAMAP-Rule" id="MF_00367"/>
    </source>
</evidence>
<evidence type="ECO:0000255" key="2">
    <source>
        <dbReference type="PROSITE-ProRule" id="PRU01050"/>
    </source>
</evidence>
<keyword id="KW-1003">Cell membrane</keyword>
<keyword id="KW-0963">Cytoplasm</keyword>
<keyword id="KW-0342">GTP-binding</keyword>
<keyword id="KW-0472">Membrane</keyword>
<keyword id="KW-0547">Nucleotide-binding</keyword>
<keyword id="KW-1185">Reference proteome</keyword>
<keyword id="KW-0690">Ribosome biogenesis</keyword>
<keyword id="KW-0694">RNA-binding</keyword>
<keyword id="KW-0699">rRNA-binding</keyword>
<organism>
    <name type="scientific">Leuconostoc citreum (strain KM20)</name>
    <dbReference type="NCBI Taxonomy" id="349519"/>
    <lineage>
        <taxon>Bacteria</taxon>
        <taxon>Bacillati</taxon>
        <taxon>Bacillota</taxon>
        <taxon>Bacilli</taxon>
        <taxon>Lactobacillales</taxon>
        <taxon>Lactobacillaceae</taxon>
        <taxon>Leuconostoc</taxon>
    </lineage>
</organism>
<protein>
    <recommendedName>
        <fullName evidence="1">GTPase Era</fullName>
    </recommendedName>
</protein>
<accession>B1MYE3</accession>
<feature type="chain" id="PRO_1000121338" description="GTPase Era">
    <location>
        <begin position="1"/>
        <end position="303"/>
    </location>
</feature>
<feature type="domain" description="Era-type G" evidence="2">
    <location>
        <begin position="7"/>
        <end position="176"/>
    </location>
</feature>
<feature type="domain" description="KH type-2" evidence="1">
    <location>
        <begin position="207"/>
        <end position="284"/>
    </location>
</feature>
<feature type="region of interest" description="G1" evidence="2">
    <location>
        <begin position="15"/>
        <end position="22"/>
    </location>
</feature>
<feature type="region of interest" description="G2" evidence="2">
    <location>
        <begin position="41"/>
        <end position="45"/>
    </location>
</feature>
<feature type="region of interest" description="G3" evidence="2">
    <location>
        <begin position="62"/>
        <end position="65"/>
    </location>
</feature>
<feature type="region of interest" description="G4" evidence="2">
    <location>
        <begin position="125"/>
        <end position="128"/>
    </location>
</feature>
<feature type="region of interest" description="G5" evidence="2">
    <location>
        <begin position="155"/>
        <end position="157"/>
    </location>
</feature>
<feature type="binding site" evidence="1">
    <location>
        <begin position="15"/>
        <end position="22"/>
    </location>
    <ligand>
        <name>GTP</name>
        <dbReference type="ChEBI" id="CHEBI:37565"/>
    </ligand>
</feature>
<feature type="binding site" evidence="1">
    <location>
        <begin position="62"/>
        <end position="66"/>
    </location>
    <ligand>
        <name>GTP</name>
        <dbReference type="ChEBI" id="CHEBI:37565"/>
    </ligand>
</feature>
<feature type="binding site" evidence="1">
    <location>
        <begin position="125"/>
        <end position="128"/>
    </location>
    <ligand>
        <name>GTP</name>
        <dbReference type="ChEBI" id="CHEBI:37565"/>
    </ligand>
</feature>
<name>ERA_LEUCK</name>
<comment type="function">
    <text evidence="1">An essential GTPase that binds both GDP and GTP, with rapid nucleotide exchange. Plays a role in 16S rRNA processing and 30S ribosomal subunit biogenesis and possibly also in cell cycle regulation and energy metabolism.</text>
</comment>
<comment type="subunit">
    <text evidence="1">Monomer.</text>
</comment>
<comment type="subcellular location">
    <subcellularLocation>
        <location>Cytoplasm</location>
    </subcellularLocation>
    <subcellularLocation>
        <location evidence="1">Cell membrane</location>
        <topology evidence="1">Peripheral membrane protein</topology>
    </subcellularLocation>
</comment>
<comment type="similarity">
    <text evidence="1 2">Belongs to the TRAFAC class TrmE-Era-EngA-EngB-Septin-like GTPase superfamily. Era GTPase family.</text>
</comment>
<reference key="1">
    <citation type="journal article" date="2008" name="J. Bacteriol.">
        <title>Complete genome sequence of Leuconostoc citreum KM20.</title>
        <authorList>
            <person name="Kim J.F."/>
            <person name="Jeong H."/>
            <person name="Lee J.-S."/>
            <person name="Choi S.-H."/>
            <person name="Ha M."/>
            <person name="Hur C.-G."/>
            <person name="Kim J.-S."/>
            <person name="Lee S."/>
            <person name="Park H.-S."/>
            <person name="Park Y.-H."/>
            <person name="Oh T.K."/>
        </authorList>
    </citation>
    <scope>NUCLEOTIDE SEQUENCE [LARGE SCALE GENOMIC DNA]</scope>
    <source>
        <strain>KM20</strain>
    </source>
</reference>
<sequence length="303" mass="34235">MAESTFKSGFVAIIGRPNVGKSTLLNRIVGEKIAIMSDKAQTTRNKIQGIYTTDNAQVVFIDTPGVHKPQNSLGNFMVKSAFSALHEADAIWFVVDASMPRGRGDDFIISRLNEVTETPIYLLINKVDLIAREELLAIIESYQVDAPTWTEVFPISATEGDNVPELLDNVVSHLDEGPQYFDADQLTDHPERFVIGELIREKVLQLTRQEVPHSVAVVIDKIAREDEEKIHIQASIIVERPTQKNIIIGKQGTMIKNIGTRARKDIERLMGDKVFLETWVKVEPRWRDRPQALQTLGYNEENY</sequence>
<proteinExistence type="inferred from homology"/>
<gene>
    <name evidence="1" type="primary">era</name>
    <name type="ordered locus">LCK_00713</name>
</gene>
<dbReference type="EMBL" id="DQ489736">
    <property type="protein sequence ID" value="ACA82545.1"/>
    <property type="molecule type" value="Genomic_DNA"/>
</dbReference>
<dbReference type="RefSeq" id="WP_004899793.1">
    <property type="nucleotide sequence ID" value="NC_010471.1"/>
</dbReference>
<dbReference type="SMR" id="B1MYE3"/>
<dbReference type="STRING" id="349519.LCK_00713"/>
<dbReference type="KEGG" id="lci:LCK_00713"/>
<dbReference type="eggNOG" id="COG1159">
    <property type="taxonomic scope" value="Bacteria"/>
</dbReference>
<dbReference type="HOGENOM" id="CLU_038009_1_0_9"/>
<dbReference type="OrthoDB" id="9805918at2"/>
<dbReference type="Proteomes" id="UP000002166">
    <property type="component" value="Chromosome"/>
</dbReference>
<dbReference type="GO" id="GO:0005829">
    <property type="term" value="C:cytosol"/>
    <property type="evidence" value="ECO:0007669"/>
    <property type="project" value="TreeGrafter"/>
</dbReference>
<dbReference type="GO" id="GO:0005886">
    <property type="term" value="C:plasma membrane"/>
    <property type="evidence" value="ECO:0007669"/>
    <property type="project" value="UniProtKB-SubCell"/>
</dbReference>
<dbReference type="GO" id="GO:0005525">
    <property type="term" value="F:GTP binding"/>
    <property type="evidence" value="ECO:0007669"/>
    <property type="project" value="UniProtKB-UniRule"/>
</dbReference>
<dbReference type="GO" id="GO:0003924">
    <property type="term" value="F:GTPase activity"/>
    <property type="evidence" value="ECO:0007669"/>
    <property type="project" value="UniProtKB-UniRule"/>
</dbReference>
<dbReference type="GO" id="GO:0043024">
    <property type="term" value="F:ribosomal small subunit binding"/>
    <property type="evidence" value="ECO:0007669"/>
    <property type="project" value="TreeGrafter"/>
</dbReference>
<dbReference type="GO" id="GO:0070181">
    <property type="term" value="F:small ribosomal subunit rRNA binding"/>
    <property type="evidence" value="ECO:0007669"/>
    <property type="project" value="UniProtKB-UniRule"/>
</dbReference>
<dbReference type="GO" id="GO:0000028">
    <property type="term" value="P:ribosomal small subunit assembly"/>
    <property type="evidence" value="ECO:0007669"/>
    <property type="project" value="TreeGrafter"/>
</dbReference>
<dbReference type="CDD" id="cd04163">
    <property type="entry name" value="Era"/>
    <property type="match status" value="1"/>
</dbReference>
<dbReference type="CDD" id="cd22534">
    <property type="entry name" value="KH-II_Era"/>
    <property type="match status" value="1"/>
</dbReference>
<dbReference type="FunFam" id="3.30.300.20:FF:000003">
    <property type="entry name" value="GTPase Era"/>
    <property type="match status" value="1"/>
</dbReference>
<dbReference type="FunFam" id="3.40.50.300:FF:000094">
    <property type="entry name" value="GTPase Era"/>
    <property type="match status" value="1"/>
</dbReference>
<dbReference type="Gene3D" id="3.30.300.20">
    <property type="match status" value="1"/>
</dbReference>
<dbReference type="Gene3D" id="3.40.50.300">
    <property type="entry name" value="P-loop containing nucleotide triphosphate hydrolases"/>
    <property type="match status" value="1"/>
</dbReference>
<dbReference type="HAMAP" id="MF_00367">
    <property type="entry name" value="GTPase_Era"/>
    <property type="match status" value="1"/>
</dbReference>
<dbReference type="InterPro" id="IPR030388">
    <property type="entry name" value="G_ERA_dom"/>
</dbReference>
<dbReference type="InterPro" id="IPR006073">
    <property type="entry name" value="GTP-bd"/>
</dbReference>
<dbReference type="InterPro" id="IPR005662">
    <property type="entry name" value="GTPase_Era-like"/>
</dbReference>
<dbReference type="InterPro" id="IPR015946">
    <property type="entry name" value="KH_dom-like_a/b"/>
</dbReference>
<dbReference type="InterPro" id="IPR004044">
    <property type="entry name" value="KH_dom_type_2"/>
</dbReference>
<dbReference type="InterPro" id="IPR009019">
    <property type="entry name" value="KH_sf_prok-type"/>
</dbReference>
<dbReference type="InterPro" id="IPR027417">
    <property type="entry name" value="P-loop_NTPase"/>
</dbReference>
<dbReference type="InterPro" id="IPR005225">
    <property type="entry name" value="Small_GTP-bd"/>
</dbReference>
<dbReference type="NCBIfam" id="TIGR00436">
    <property type="entry name" value="era"/>
    <property type="match status" value="1"/>
</dbReference>
<dbReference type="NCBIfam" id="NF000908">
    <property type="entry name" value="PRK00089.1"/>
    <property type="match status" value="1"/>
</dbReference>
<dbReference type="NCBIfam" id="TIGR00231">
    <property type="entry name" value="small_GTP"/>
    <property type="match status" value="1"/>
</dbReference>
<dbReference type="PANTHER" id="PTHR42698">
    <property type="entry name" value="GTPASE ERA"/>
    <property type="match status" value="1"/>
</dbReference>
<dbReference type="PANTHER" id="PTHR42698:SF1">
    <property type="entry name" value="GTPASE ERA, MITOCHONDRIAL"/>
    <property type="match status" value="1"/>
</dbReference>
<dbReference type="Pfam" id="PF07650">
    <property type="entry name" value="KH_2"/>
    <property type="match status" value="1"/>
</dbReference>
<dbReference type="Pfam" id="PF01926">
    <property type="entry name" value="MMR_HSR1"/>
    <property type="match status" value="1"/>
</dbReference>
<dbReference type="PRINTS" id="PR00326">
    <property type="entry name" value="GTP1OBG"/>
</dbReference>
<dbReference type="SUPFAM" id="SSF52540">
    <property type="entry name" value="P-loop containing nucleoside triphosphate hydrolases"/>
    <property type="match status" value="1"/>
</dbReference>
<dbReference type="SUPFAM" id="SSF54814">
    <property type="entry name" value="Prokaryotic type KH domain (KH-domain type II)"/>
    <property type="match status" value="1"/>
</dbReference>
<dbReference type="PROSITE" id="PS51713">
    <property type="entry name" value="G_ERA"/>
    <property type="match status" value="1"/>
</dbReference>
<dbReference type="PROSITE" id="PS50823">
    <property type="entry name" value="KH_TYPE_2"/>
    <property type="match status" value="1"/>
</dbReference>